<keyword id="KW-0687">Ribonucleoprotein</keyword>
<keyword id="KW-0689">Ribosomal protein</keyword>
<keyword id="KW-0694">RNA-binding</keyword>
<keyword id="KW-0699">rRNA-binding</keyword>
<reference key="1">
    <citation type="journal article" date="2006" name="PLoS Biol.">
        <title>The genome of deep-sea vent chemolithoautotroph Thiomicrospira crunogena XCL-2.</title>
        <authorList>
            <person name="Scott K.M."/>
            <person name="Sievert S.M."/>
            <person name="Abril F.N."/>
            <person name="Ball L.A."/>
            <person name="Barrett C.J."/>
            <person name="Blake R.A."/>
            <person name="Boller A.J."/>
            <person name="Chain P.S.G."/>
            <person name="Clark J.A."/>
            <person name="Davis C.R."/>
            <person name="Detter C."/>
            <person name="Do K.F."/>
            <person name="Dobrinski K.P."/>
            <person name="Faza B.I."/>
            <person name="Fitzpatrick K.A."/>
            <person name="Freyermuth S.K."/>
            <person name="Harmer T.L."/>
            <person name="Hauser L.J."/>
            <person name="Huegler M."/>
            <person name="Kerfeld C.A."/>
            <person name="Klotz M.G."/>
            <person name="Kong W.W."/>
            <person name="Land M."/>
            <person name="Lapidus A."/>
            <person name="Larimer F.W."/>
            <person name="Longo D.L."/>
            <person name="Lucas S."/>
            <person name="Malfatti S.A."/>
            <person name="Massey S.E."/>
            <person name="Martin D.D."/>
            <person name="McCuddin Z."/>
            <person name="Meyer F."/>
            <person name="Moore J.L."/>
            <person name="Ocampo L.H. Jr."/>
            <person name="Paul J.H."/>
            <person name="Paulsen I.T."/>
            <person name="Reep D.K."/>
            <person name="Ren Q."/>
            <person name="Ross R.L."/>
            <person name="Sato P.Y."/>
            <person name="Thomas P."/>
            <person name="Tinkham L.E."/>
            <person name="Zeruth G.T."/>
        </authorList>
    </citation>
    <scope>NUCLEOTIDE SEQUENCE [LARGE SCALE GENOMIC DNA]</scope>
    <source>
        <strain>DSM 25203 / XCL-2</strain>
    </source>
</reference>
<accession>Q31ID5</accession>
<dbReference type="EMBL" id="CP000109">
    <property type="protein sequence ID" value="ABB41088.1"/>
    <property type="molecule type" value="Genomic_DNA"/>
</dbReference>
<dbReference type="SMR" id="Q31ID5"/>
<dbReference type="STRING" id="317025.Tcr_0492"/>
<dbReference type="KEGG" id="tcx:Tcr_0492"/>
<dbReference type="eggNOG" id="COG0268">
    <property type="taxonomic scope" value="Bacteria"/>
</dbReference>
<dbReference type="HOGENOM" id="CLU_160655_4_0_6"/>
<dbReference type="OrthoDB" id="9807974at2"/>
<dbReference type="GO" id="GO:0005829">
    <property type="term" value="C:cytosol"/>
    <property type="evidence" value="ECO:0007669"/>
    <property type="project" value="TreeGrafter"/>
</dbReference>
<dbReference type="GO" id="GO:0015935">
    <property type="term" value="C:small ribosomal subunit"/>
    <property type="evidence" value="ECO:0007669"/>
    <property type="project" value="TreeGrafter"/>
</dbReference>
<dbReference type="GO" id="GO:0070181">
    <property type="term" value="F:small ribosomal subunit rRNA binding"/>
    <property type="evidence" value="ECO:0007669"/>
    <property type="project" value="TreeGrafter"/>
</dbReference>
<dbReference type="GO" id="GO:0003735">
    <property type="term" value="F:structural constituent of ribosome"/>
    <property type="evidence" value="ECO:0007669"/>
    <property type="project" value="InterPro"/>
</dbReference>
<dbReference type="GO" id="GO:0006412">
    <property type="term" value="P:translation"/>
    <property type="evidence" value="ECO:0007669"/>
    <property type="project" value="UniProtKB-UniRule"/>
</dbReference>
<dbReference type="FunFam" id="1.20.58.110:FF:000001">
    <property type="entry name" value="30S ribosomal protein S20"/>
    <property type="match status" value="1"/>
</dbReference>
<dbReference type="Gene3D" id="1.20.58.110">
    <property type="entry name" value="Ribosomal protein S20"/>
    <property type="match status" value="1"/>
</dbReference>
<dbReference type="HAMAP" id="MF_00500">
    <property type="entry name" value="Ribosomal_bS20"/>
    <property type="match status" value="1"/>
</dbReference>
<dbReference type="InterPro" id="IPR002583">
    <property type="entry name" value="Ribosomal_bS20"/>
</dbReference>
<dbReference type="InterPro" id="IPR036510">
    <property type="entry name" value="Ribosomal_bS20_sf"/>
</dbReference>
<dbReference type="NCBIfam" id="TIGR00029">
    <property type="entry name" value="S20"/>
    <property type="match status" value="1"/>
</dbReference>
<dbReference type="PANTHER" id="PTHR33398">
    <property type="entry name" value="30S RIBOSOMAL PROTEIN S20"/>
    <property type="match status" value="1"/>
</dbReference>
<dbReference type="PANTHER" id="PTHR33398:SF1">
    <property type="entry name" value="SMALL RIBOSOMAL SUBUNIT PROTEIN BS20C"/>
    <property type="match status" value="1"/>
</dbReference>
<dbReference type="Pfam" id="PF01649">
    <property type="entry name" value="Ribosomal_S20p"/>
    <property type="match status" value="1"/>
</dbReference>
<dbReference type="SUPFAM" id="SSF46992">
    <property type="entry name" value="Ribosomal protein S20"/>
    <property type="match status" value="1"/>
</dbReference>
<feature type="chain" id="PRO_0000236463" description="Small ribosomal subunit protein bS20">
    <location>
        <begin position="1"/>
        <end position="87"/>
    </location>
</feature>
<feature type="region of interest" description="Disordered" evidence="2">
    <location>
        <begin position="1"/>
        <end position="27"/>
    </location>
</feature>
<feature type="compositionally biased region" description="Basic residues" evidence="2">
    <location>
        <begin position="9"/>
        <end position="20"/>
    </location>
</feature>
<sequence length="87" mass="9432">MANSVQATKRARQAEKHRQHNAGMRAAMRTTVKKVLSAVEAGDKEAATAAFRVAQSSLDNMARKGLIAKNKAARNKSRINARIKAMA</sequence>
<name>RS20_HYDCU</name>
<evidence type="ECO:0000255" key="1">
    <source>
        <dbReference type="HAMAP-Rule" id="MF_00500"/>
    </source>
</evidence>
<evidence type="ECO:0000256" key="2">
    <source>
        <dbReference type="SAM" id="MobiDB-lite"/>
    </source>
</evidence>
<evidence type="ECO:0000305" key="3"/>
<organism>
    <name type="scientific">Hydrogenovibrio crunogenus (strain DSM 25203 / XCL-2)</name>
    <name type="common">Thiomicrospira crunogena</name>
    <dbReference type="NCBI Taxonomy" id="317025"/>
    <lineage>
        <taxon>Bacteria</taxon>
        <taxon>Pseudomonadati</taxon>
        <taxon>Pseudomonadota</taxon>
        <taxon>Gammaproteobacteria</taxon>
        <taxon>Thiotrichales</taxon>
        <taxon>Piscirickettsiaceae</taxon>
        <taxon>Hydrogenovibrio</taxon>
    </lineage>
</organism>
<comment type="function">
    <text evidence="1">Binds directly to 16S ribosomal RNA.</text>
</comment>
<comment type="similarity">
    <text evidence="1">Belongs to the bacterial ribosomal protein bS20 family.</text>
</comment>
<proteinExistence type="inferred from homology"/>
<protein>
    <recommendedName>
        <fullName evidence="1">Small ribosomal subunit protein bS20</fullName>
    </recommendedName>
    <alternativeName>
        <fullName evidence="3">30S ribosomal protein S20</fullName>
    </alternativeName>
</protein>
<gene>
    <name evidence="1" type="primary">rpsT</name>
    <name type="ordered locus">Tcr_0492</name>
</gene>